<gene>
    <name type="primary">SRGAP2B</name>
    <name type="synonym">SRGAP2P2</name>
</gene>
<accession>P0DMP2</accession>
<sequence length="458" mass="53406">MTSPAKFKKDKEIIAEYDTQVKEIRAQLTEQMKCLDQQCELRVQLLQDLQDFFRKKAEIEMDYSRNLEKLAERFLAKTCSTKDQQFKKDQNVLSPVNCWNLLLNQVKRESRDHTTLSDIYLNNIIPRFVQVSEDSGRLFKKSKEVGQQLQDDLMKVLNELYSVMKTYHMYNADSISAQSKLKEAEKQEEKQIGKSVKQEDRQTPRSPDSTANVRIEEKHVRRSSVKKIEKMKEKRQAKYTENKLKAIKARNEYLLALEATNASVFKYYIHDLSDLIDCCDLGYHASLNRALRTFLSAELNLEQSKHEGLDAIENAVENLDATSDKQRLMEMYNNVFCPPMKFEFQPHMGDMASQLCAQQPVQSELLQRCQQLQSRLSTLKIENEEVKKTMEATLQTIQDIVTVEDFDVSDCFQYSNSMESVKSTVSETFMSKPSIAKRRANQQETEQFYFTVRECYGF</sequence>
<dbReference type="EMBL" id="AC242498">
    <property type="status" value="NOT_ANNOTATED_CDS"/>
    <property type="molecule type" value="Genomic_DNA"/>
</dbReference>
<dbReference type="EMBL" id="FP700111">
    <property type="status" value="NOT_ANNOTATED_CDS"/>
    <property type="molecule type" value="Genomic_DNA"/>
</dbReference>
<dbReference type="CCDS" id="CCDS91032.1"/>
<dbReference type="RefSeq" id="NP_001353209.1">
    <property type="nucleotide sequence ID" value="NM_001366280.2"/>
</dbReference>
<dbReference type="RefSeq" id="XP_016857574.1">
    <property type="nucleotide sequence ID" value="XM_017002085.1"/>
</dbReference>
<dbReference type="SMR" id="P0DMP2"/>
<dbReference type="BioGRID" id="571916">
    <property type="interactions" value="9"/>
</dbReference>
<dbReference type="IntAct" id="P0DMP2">
    <property type="interactions" value="1"/>
</dbReference>
<dbReference type="STRING" id="9606.ENSP00000493121"/>
<dbReference type="iPTMnet" id="P0DMP2"/>
<dbReference type="PhosphoSitePlus" id="P0DMP2"/>
<dbReference type="BioMuta" id="SRGAP2B"/>
<dbReference type="jPOST" id="P0DMP2"/>
<dbReference type="MassIVE" id="P0DMP2"/>
<dbReference type="PaxDb" id="9606-ENSP00000477776"/>
<dbReference type="PeptideAtlas" id="P0DMP2"/>
<dbReference type="Antibodypedia" id="77434">
    <property type="antibodies" value="25 antibodies from 5 providers"/>
</dbReference>
<dbReference type="Ensembl" id="ENST00000612199.4">
    <property type="protein sequence ID" value="ENSP00000477776.1"/>
    <property type="gene ID" value="ENSG00000196369.12"/>
</dbReference>
<dbReference type="GeneID" id="647135"/>
<dbReference type="UCSC" id="uc031urt.2">
    <property type="organism name" value="human"/>
</dbReference>
<dbReference type="AGR" id="HGNC:35237"/>
<dbReference type="GeneCards" id="SRGAP2B"/>
<dbReference type="HGNC" id="HGNC:35237">
    <property type="gene designation" value="SRGAP2B"/>
</dbReference>
<dbReference type="HPA" id="ENSG00000196369">
    <property type="expression patterns" value="Group enriched (brain, skin)"/>
</dbReference>
<dbReference type="MIM" id="614703">
    <property type="type" value="gene"/>
</dbReference>
<dbReference type="neXtProt" id="NX_P0DMP2"/>
<dbReference type="OpenTargets" id="ENSG00000196369"/>
<dbReference type="VEuPathDB" id="HostDB:ENSG00000196369"/>
<dbReference type="eggNOG" id="KOG3565">
    <property type="taxonomic scope" value="Eukaryota"/>
</dbReference>
<dbReference type="GeneTree" id="ENSGT00950000182824"/>
<dbReference type="HOGENOM" id="CLU_005715_1_0_1"/>
<dbReference type="InParanoid" id="P0DMP2"/>
<dbReference type="OrthoDB" id="9519756at2759"/>
<dbReference type="PAN-GO" id="P0DMP2">
    <property type="GO annotations" value="2 GO annotations based on evolutionary models"/>
</dbReference>
<dbReference type="PathwayCommons" id="P0DMP2"/>
<dbReference type="SignaLink" id="P0DMP2"/>
<dbReference type="BioGRID-ORCS" id="647135">
    <property type="hits" value="30 hits in 200 CRISPR screens"/>
</dbReference>
<dbReference type="ChiTaRS" id="SRGAP2B">
    <property type="organism name" value="human"/>
</dbReference>
<dbReference type="GenomeRNAi" id="647135"/>
<dbReference type="Pharos" id="P0DMP2">
    <property type="development level" value="Tdark"/>
</dbReference>
<dbReference type="PRO" id="PR:P0DMP2"/>
<dbReference type="Proteomes" id="UP000005640">
    <property type="component" value="Chromosome 1"/>
</dbReference>
<dbReference type="RNAct" id="P0DMP2">
    <property type="molecule type" value="protein"/>
</dbReference>
<dbReference type="Bgee" id="ENSG00000196369">
    <property type="expression patterns" value="Expressed in cerebellar vermis and 108 other cell types or tissues"/>
</dbReference>
<dbReference type="ExpressionAtlas" id="P0DMP2">
    <property type="expression patterns" value="baseline and differential"/>
</dbReference>
<dbReference type="GO" id="GO:0005737">
    <property type="term" value="C:cytoplasm"/>
    <property type="evidence" value="ECO:0000318"/>
    <property type="project" value="GO_Central"/>
</dbReference>
<dbReference type="GO" id="GO:0098978">
    <property type="term" value="C:glutamatergic synapse"/>
    <property type="evidence" value="ECO:0000314"/>
    <property type="project" value="SynGO"/>
</dbReference>
<dbReference type="GO" id="GO:0030336">
    <property type="term" value="P:negative regulation of cell migration"/>
    <property type="evidence" value="ECO:0000318"/>
    <property type="project" value="GO_Central"/>
</dbReference>
<dbReference type="GO" id="GO:0007399">
    <property type="term" value="P:nervous system development"/>
    <property type="evidence" value="ECO:0007669"/>
    <property type="project" value="UniProtKB-KW"/>
</dbReference>
<dbReference type="GO" id="GO:0051963">
    <property type="term" value="P:regulation of synapse assembly"/>
    <property type="evidence" value="ECO:0000314"/>
    <property type="project" value="SynGO"/>
</dbReference>
<dbReference type="FunFam" id="1.20.1270.60:FF:000006">
    <property type="entry name" value="SLIT-ROBO Rho GTPase-activating protein 1 isoform 2"/>
    <property type="match status" value="1"/>
</dbReference>
<dbReference type="Gene3D" id="1.20.1270.60">
    <property type="entry name" value="Arfaptin homology (AH) domain/BAR domain"/>
    <property type="match status" value="1"/>
</dbReference>
<dbReference type="InterPro" id="IPR027267">
    <property type="entry name" value="AH/BAR_dom_sf"/>
</dbReference>
<dbReference type="InterPro" id="IPR031160">
    <property type="entry name" value="F_BAR"/>
</dbReference>
<dbReference type="InterPro" id="IPR001060">
    <property type="entry name" value="FCH_dom"/>
</dbReference>
<dbReference type="InterPro" id="IPR051627">
    <property type="entry name" value="SLIT-ROBO_RhoGAP"/>
</dbReference>
<dbReference type="PANTHER" id="PTHR14166">
    <property type="entry name" value="SLIT-ROBO RHO GTPASE ACTIVATING PROTEIN"/>
    <property type="match status" value="1"/>
</dbReference>
<dbReference type="Pfam" id="PF00611">
    <property type="entry name" value="FCH"/>
    <property type="match status" value="1"/>
</dbReference>
<dbReference type="SMART" id="SM00055">
    <property type="entry name" value="FCH"/>
    <property type="match status" value="1"/>
</dbReference>
<dbReference type="SUPFAM" id="SSF103657">
    <property type="entry name" value="BAR/IMD domain-like"/>
    <property type="match status" value="1"/>
</dbReference>
<dbReference type="PROSITE" id="PS51741">
    <property type="entry name" value="F_BAR"/>
    <property type="match status" value="1"/>
</dbReference>
<organism>
    <name type="scientific">Homo sapiens</name>
    <name type="common">Human</name>
    <dbReference type="NCBI Taxonomy" id="9606"/>
    <lineage>
        <taxon>Eukaryota</taxon>
        <taxon>Metazoa</taxon>
        <taxon>Chordata</taxon>
        <taxon>Craniata</taxon>
        <taxon>Vertebrata</taxon>
        <taxon>Euteleostomi</taxon>
        <taxon>Mammalia</taxon>
        <taxon>Eutheria</taxon>
        <taxon>Euarchontoglires</taxon>
        <taxon>Primates</taxon>
        <taxon>Haplorrhini</taxon>
        <taxon>Catarrhini</taxon>
        <taxon>Hominidae</taxon>
        <taxon>Homo</taxon>
    </lineage>
</organism>
<reference key="1">
    <citation type="journal article" date="2006" name="Nature">
        <title>The DNA sequence and biological annotation of human chromosome 1.</title>
        <authorList>
            <person name="Gregory S.G."/>
            <person name="Barlow K.F."/>
            <person name="McLay K.E."/>
            <person name="Kaul R."/>
            <person name="Swarbreck D."/>
            <person name="Dunham A."/>
            <person name="Scott C.E."/>
            <person name="Howe K.L."/>
            <person name="Woodfine K."/>
            <person name="Spencer C.C.A."/>
            <person name="Jones M.C."/>
            <person name="Gillson C."/>
            <person name="Searle S."/>
            <person name="Zhou Y."/>
            <person name="Kokocinski F."/>
            <person name="McDonald L."/>
            <person name="Evans R."/>
            <person name="Phillips K."/>
            <person name="Atkinson A."/>
            <person name="Cooper R."/>
            <person name="Jones C."/>
            <person name="Hall R.E."/>
            <person name="Andrews T.D."/>
            <person name="Lloyd C."/>
            <person name="Ainscough R."/>
            <person name="Almeida J.P."/>
            <person name="Ambrose K.D."/>
            <person name="Anderson F."/>
            <person name="Andrew R.W."/>
            <person name="Ashwell R.I.S."/>
            <person name="Aubin K."/>
            <person name="Babbage A.K."/>
            <person name="Bagguley C.L."/>
            <person name="Bailey J."/>
            <person name="Beasley H."/>
            <person name="Bethel G."/>
            <person name="Bird C.P."/>
            <person name="Bray-Allen S."/>
            <person name="Brown J.Y."/>
            <person name="Brown A.J."/>
            <person name="Buckley D."/>
            <person name="Burton J."/>
            <person name="Bye J."/>
            <person name="Carder C."/>
            <person name="Chapman J.C."/>
            <person name="Clark S.Y."/>
            <person name="Clarke G."/>
            <person name="Clee C."/>
            <person name="Cobley V."/>
            <person name="Collier R.E."/>
            <person name="Corby N."/>
            <person name="Coville G.J."/>
            <person name="Davies J."/>
            <person name="Deadman R."/>
            <person name="Dunn M."/>
            <person name="Earthrowl M."/>
            <person name="Ellington A.G."/>
            <person name="Errington H."/>
            <person name="Frankish A."/>
            <person name="Frankland J."/>
            <person name="French L."/>
            <person name="Garner P."/>
            <person name="Garnett J."/>
            <person name="Gay L."/>
            <person name="Ghori M.R.J."/>
            <person name="Gibson R."/>
            <person name="Gilby L.M."/>
            <person name="Gillett W."/>
            <person name="Glithero R.J."/>
            <person name="Grafham D.V."/>
            <person name="Griffiths C."/>
            <person name="Griffiths-Jones S."/>
            <person name="Grocock R."/>
            <person name="Hammond S."/>
            <person name="Harrison E.S.I."/>
            <person name="Hart E."/>
            <person name="Haugen E."/>
            <person name="Heath P.D."/>
            <person name="Holmes S."/>
            <person name="Holt K."/>
            <person name="Howden P.J."/>
            <person name="Hunt A.R."/>
            <person name="Hunt S.E."/>
            <person name="Hunter G."/>
            <person name="Isherwood J."/>
            <person name="James R."/>
            <person name="Johnson C."/>
            <person name="Johnson D."/>
            <person name="Joy A."/>
            <person name="Kay M."/>
            <person name="Kershaw J.K."/>
            <person name="Kibukawa M."/>
            <person name="Kimberley A.M."/>
            <person name="King A."/>
            <person name="Knights A.J."/>
            <person name="Lad H."/>
            <person name="Laird G."/>
            <person name="Lawlor S."/>
            <person name="Leongamornlert D.A."/>
            <person name="Lloyd D.M."/>
            <person name="Loveland J."/>
            <person name="Lovell J."/>
            <person name="Lush M.J."/>
            <person name="Lyne R."/>
            <person name="Martin S."/>
            <person name="Mashreghi-Mohammadi M."/>
            <person name="Matthews L."/>
            <person name="Matthews N.S.W."/>
            <person name="McLaren S."/>
            <person name="Milne S."/>
            <person name="Mistry S."/>
            <person name="Moore M.J.F."/>
            <person name="Nickerson T."/>
            <person name="O'Dell C.N."/>
            <person name="Oliver K."/>
            <person name="Palmeiri A."/>
            <person name="Palmer S.A."/>
            <person name="Parker A."/>
            <person name="Patel D."/>
            <person name="Pearce A.V."/>
            <person name="Peck A.I."/>
            <person name="Pelan S."/>
            <person name="Phelps K."/>
            <person name="Phillimore B.J."/>
            <person name="Plumb R."/>
            <person name="Rajan J."/>
            <person name="Raymond C."/>
            <person name="Rouse G."/>
            <person name="Saenphimmachak C."/>
            <person name="Sehra H.K."/>
            <person name="Sheridan E."/>
            <person name="Shownkeen R."/>
            <person name="Sims S."/>
            <person name="Skuce C.D."/>
            <person name="Smith M."/>
            <person name="Steward C."/>
            <person name="Subramanian S."/>
            <person name="Sycamore N."/>
            <person name="Tracey A."/>
            <person name="Tromans A."/>
            <person name="Van Helmond Z."/>
            <person name="Wall M."/>
            <person name="Wallis J.M."/>
            <person name="White S."/>
            <person name="Whitehead S.L."/>
            <person name="Wilkinson J.E."/>
            <person name="Willey D.L."/>
            <person name="Williams H."/>
            <person name="Wilming L."/>
            <person name="Wray P.W."/>
            <person name="Wu Z."/>
            <person name="Coulson A."/>
            <person name="Vaudin M."/>
            <person name="Sulston J.E."/>
            <person name="Durbin R.M."/>
            <person name="Hubbard T."/>
            <person name="Wooster R."/>
            <person name="Dunham I."/>
            <person name="Carter N.P."/>
            <person name="McVean G."/>
            <person name="Ross M.T."/>
            <person name="Harrow J."/>
            <person name="Olson M.V."/>
            <person name="Beck S."/>
            <person name="Rogers J."/>
            <person name="Bentley D.R."/>
        </authorList>
    </citation>
    <scope>NUCLEOTIDE SEQUENCE [LARGE SCALE GENOMIC DNA]</scope>
</reference>
<reference key="2">
    <citation type="journal article" date="2012" name="Cell">
        <title>Evolution of human-specific neural SRGAP2 genes by incomplete segmental duplication.</title>
        <authorList>
            <person name="Dennis M.Y."/>
            <person name="Nuttle X."/>
            <person name="Sudmant P.H."/>
            <person name="Antonacci F."/>
            <person name="Graves T.A."/>
            <person name="Nefedov M."/>
            <person name="Rosenfeld J.A."/>
            <person name="Sajjadian S."/>
            <person name="Malig M."/>
            <person name="Kotkiewicz H."/>
            <person name="Curry C.J."/>
            <person name="Shafer S."/>
            <person name="Shaffer L.G."/>
            <person name="de Jong P.J."/>
            <person name="Wilson R.K."/>
            <person name="Eichler E.E."/>
        </authorList>
    </citation>
    <scope>IDENTIFICATION</scope>
    <scope>CHROMOSOMAL LOCATION</scope>
</reference>
<reference key="3">
    <citation type="journal article" date="2012" name="Cell">
        <title>Inhibition of SRGAP2 function by its human-specific paralogs induces neoteny during spine maturation.</title>
        <authorList>
            <person name="Charrier C."/>
            <person name="Joshi K."/>
            <person name="Coutinho-Budd J."/>
            <person name="Kim J.E."/>
            <person name="Lambert N."/>
            <person name="de Marchena J."/>
            <person name="Jin W.L."/>
            <person name="Vanderhaeghen P."/>
            <person name="Ghosh A."/>
            <person name="Sassa T."/>
            <person name="Polleux F."/>
        </authorList>
    </citation>
    <scope>IDENTIFICATION</scope>
    <scope>FUNCTION</scope>
</reference>
<reference key="4">
    <citation type="journal article" date="2019" name="Sci. Rep.">
        <title>The human-specific paralogs SRGAP2B and SRGAP2C differentially modulate SRGAP2A-dependent synaptic development.</title>
        <authorList>
            <person name="Schmidt E.R.E."/>
            <person name="Kupferman J.V."/>
            <person name="Stackmann M."/>
            <person name="Polleux F."/>
        </authorList>
    </citation>
    <scope>FUNCTION</scope>
</reference>
<evidence type="ECO:0000250" key="1">
    <source>
        <dbReference type="UniProtKB" id="P0DJJ0"/>
    </source>
</evidence>
<evidence type="ECO:0000255" key="2"/>
<evidence type="ECO:0000255" key="3">
    <source>
        <dbReference type="PROSITE-ProRule" id="PRU01077"/>
    </source>
</evidence>
<evidence type="ECO:0000256" key="4">
    <source>
        <dbReference type="SAM" id="MobiDB-lite"/>
    </source>
</evidence>
<evidence type="ECO:0000269" key="5">
    <source>
    </source>
</evidence>
<evidence type="ECO:0000305" key="6">
    <source>
    </source>
</evidence>
<evidence type="ECO:0000305" key="7">
    <source>
    </source>
</evidence>
<protein>
    <recommendedName>
        <fullName>SLIT-ROBO Rho GTPase-activating protein 2B</fullName>
    </recommendedName>
    <alternativeName>
        <fullName>SLIT-ROBO Rho GTPase activating protein 2 pseudogene 2</fullName>
    </alternativeName>
</protein>
<feature type="chain" id="PRO_0000430362" description="SLIT-ROBO Rho GTPase-activating protein 2B">
    <location>
        <begin position="1"/>
        <end position="458"/>
    </location>
</feature>
<feature type="domain" description="F-BAR" evidence="3">
    <location>
        <begin position="22"/>
        <end position="324"/>
    </location>
</feature>
<feature type="region of interest" description="Disordered" evidence="4">
    <location>
        <begin position="181"/>
        <end position="214"/>
    </location>
</feature>
<feature type="coiled-coil region" evidence="2">
    <location>
        <begin position="362"/>
        <end position="400"/>
    </location>
</feature>
<feature type="compositionally biased region" description="Basic and acidic residues" evidence="4">
    <location>
        <begin position="181"/>
        <end position="203"/>
    </location>
</feature>
<keyword id="KW-0175">Coiled coil</keyword>
<keyword id="KW-0524">Neurogenesis</keyword>
<keyword id="KW-1267">Proteomics identification</keyword>
<keyword id="KW-1185">Reference proteome</keyword>
<proteinExistence type="evidence at protein level"/>
<name>SRG2B_HUMAN</name>
<comment type="function">
    <text evidence="5 6 7">May regulate cell migration and differentiation through interaction with and inhibition of SRGAP2 (PubMed:31822692). In contrast to SRGAP2C, it is not able to induce long-lasting changes in synaptic density throughout adulthood (PubMed:31822692).</text>
</comment>
<comment type="subunit">
    <text evidence="1">May interact with SRGAP2; formation of the heterodimer alters SRGAP2 function.</text>
</comment>
<comment type="miscellaneous">
    <text evidence="6">This is one of the 3 duplications of the ancestral gene SRGAP2/SRGAP2A which has undergone human-specific segmental gene duplications (PubMed:22559944). The appearance of SRGAP2B in the human genome is estimated to 3,4 million years. Two larger duplications later copied SRGAP2B to chromosome 1p12 (SRGAP2C) and to proximal 1q21.1 (SRGAP2D) (PubMed:22559944). SRGAP2B was identified in some individuals but it is not clear if it produces a functional protein (PubMed:22559944).</text>
</comment>